<comment type="function">
    <text evidence="1">Catalyzes the hydrolysis of N-succinyl-L,L-diaminopimelic acid (SDAP), forming succinate and LL-2,6-diaminopimelate (DAP), an intermediate involved in the bacterial biosynthesis of lysine and meso-diaminopimelic acid, an essential component of bacterial cell walls.</text>
</comment>
<comment type="catalytic activity">
    <reaction evidence="1">
        <text>N-succinyl-(2S,6S)-2,6-diaminopimelate + H2O = (2S,6S)-2,6-diaminopimelate + succinate</text>
        <dbReference type="Rhea" id="RHEA:22608"/>
        <dbReference type="ChEBI" id="CHEBI:15377"/>
        <dbReference type="ChEBI" id="CHEBI:30031"/>
        <dbReference type="ChEBI" id="CHEBI:57609"/>
        <dbReference type="ChEBI" id="CHEBI:58087"/>
        <dbReference type="EC" id="3.5.1.18"/>
    </reaction>
</comment>
<comment type="cofactor">
    <cofactor evidence="1">
        <name>Zn(2+)</name>
        <dbReference type="ChEBI" id="CHEBI:29105"/>
    </cofactor>
    <cofactor evidence="1">
        <name>Co(2+)</name>
        <dbReference type="ChEBI" id="CHEBI:48828"/>
    </cofactor>
    <text evidence="1">Binds 2 Zn(2+) or Co(2+) ions per subunit.</text>
</comment>
<comment type="pathway">
    <text evidence="1">Amino-acid biosynthesis; L-lysine biosynthesis via DAP pathway; LL-2,6-diaminopimelate from (S)-tetrahydrodipicolinate (succinylase route): step 3/3.</text>
</comment>
<comment type="subunit">
    <text evidence="1">Homodimer.</text>
</comment>
<comment type="similarity">
    <text evidence="1">Belongs to the peptidase M20A family. DapE subfamily.</text>
</comment>
<accession>Q3IYS2</accession>
<feature type="chain" id="PRO_0000375684" description="Succinyl-diaminopimelate desuccinylase">
    <location>
        <begin position="1"/>
        <end position="380"/>
    </location>
</feature>
<feature type="active site" evidence="1">
    <location>
        <position position="71"/>
    </location>
</feature>
<feature type="active site" description="Proton acceptor" evidence="1">
    <location>
        <position position="135"/>
    </location>
</feature>
<feature type="binding site" evidence="1">
    <location>
        <position position="69"/>
    </location>
    <ligand>
        <name>Zn(2+)</name>
        <dbReference type="ChEBI" id="CHEBI:29105"/>
        <label>1</label>
    </ligand>
</feature>
<feature type="binding site" evidence="1">
    <location>
        <position position="102"/>
    </location>
    <ligand>
        <name>Zn(2+)</name>
        <dbReference type="ChEBI" id="CHEBI:29105"/>
        <label>1</label>
    </ligand>
</feature>
<feature type="binding site" evidence="1">
    <location>
        <position position="102"/>
    </location>
    <ligand>
        <name>Zn(2+)</name>
        <dbReference type="ChEBI" id="CHEBI:29105"/>
        <label>2</label>
    </ligand>
</feature>
<feature type="binding site" evidence="1">
    <location>
        <position position="136"/>
    </location>
    <ligand>
        <name>Zn(2+)</name>
        <dbReference type="ChEBI" id="CHEBI:29105"/>
        <label>2</label>
    </ligand>
</feature>
<feature type="binding site" evidence="1">
    <location>
        <position position="164"/>
    </location>
    <ligand>
        <name>Zn(2+)</name>
        <dbReference type="ChEBI" id="CHEBI:29105"/>
        <label>1</label>
    </ligand>
</feature>
<feature type="binding site" evidence="1">
    <location>
        <position position="353"/>
    </location>
    <ligand>
        <name>Zn(2+)</name>
        <dbReference type="ChEBI" id="CHEBI:29105"/>
        <label>2</label>
    </ligand>
</feature>
<reference key="1">
    <citation type="submission" date="2005-09" db="EMBL/GenBank/DDBJ databases">
        <title>Complete sequence of chromosome 1 of Rhodobacter sphaeroides 2.4.1.</title>
        <authorList>
            <person name="Copeland A."/>
            <person name="Lucas S."/>
            <person name="Lapidus A."/>
            <person name="Barry K."/>
            <person name="Detter J.C."/>
            <person name="Glavina T."/>
            <person name="Hammon N."/>
            <person name="Israni S."/>
            <person name="Pitluck S."/>
            <person name="Richardson P."/>
            <person name="Mackenzie C."/>
            <person name="Choudhary M."/>
            <person name="Larimer F."/>
            <person name="Hauser L.J."/>
            <person name="Land M."/>
            <person name="Donohue T.J."/>
            <person name="Kaplan S."/>
        </authorList>
    </citation>
    <scope>NUCLEOTIDE SEQUENCE [LARGE SCALE GENOMIC DNA]</scope>
    <source>
        <strain>ATCC 17023 / DSM 158 / JCM 6121 / CCUG 31486 / LMG 2827 / NBRC 12203 / NCIMB 8253 / ATH 2.4.1.</strain>
    </source>
</reference>
<sequence length="380" mass="40427">MPIDPVALTADLVRCPSVTPEEGGALDLIERILSGAGFDCTRVDRNGVPNLFARWGRKGANRTFGFNGHTDVVPVGDAAAWTRDPFGGEIADGWLWGRGATDMKSGVAAFVAAAVDFVQETPPDGAVVLTITGDEEGDSTDGTVALLDWMAAEGEAMSVCLVGEPTCPERLGEMMKIGRRGSMTAFFTARGVQGHSAYPHRAKNPVAALARLIDRLSSHDLDYGTEHFDASTLAVTTFDTGNPATNVIPALCRATVNIRFNDAHSGASLTRWLEEEAARVAADTGVEIALSAKISGESFLTPPGELSELVARAVEAETGLRPEPSTSGGTSDARFVRAHCPVVEFGLVGKTMHQVDERVEVAQIEPLKAIYLRILKDYFA</sequence>
<dbReference type="EC" id="3.5.1.18" evidence="1"/>
<dbReference type="EMBL" id="CP000143">
    <property type="protein sequence ID" value="ABA80312.1"/>
    <property type="molecule type" value="Genomic_DNA"/>
</dbReference>
<dbReference type="RefSeq" id="WP_011338737.1">
    <property type="nucleotide sequence ID" value="NC_007493.2"/>
</dbReference>
<dbReference type="RefSeq" id="YP_354213.1">
    <property type="nucleotide sequence ID" value="NC_007493.2"/>
</dbReference>
<dbReference type="SMR" id="Q3IYS2"/>
<dbReference type="STRING" id="272943.RSP_1128"/>
<dbReference type="EnsemblBacteria" id="ABA80312">
    <property type="protein sequence ID" value="ABA80312"/>
    <property type="gene ID" value="RSP_1128"/>
</dbReference>
<dbReference type="GeneID" id="3720826"/>
<dbReference type="KEGG" id="rsp:RSP_1128"/>
<dbReference type="PATRIC" id="fig|272943.9.peg.3106"/>
<dbReference type="eggNOG" id="COG0624">
    <property type="taxonomic scope" value="Bacteria"/>
</dbReference>
<dbReference type="OrthoDB" id="9809784at2"/>
<dbReference type="PhylomeDB" id="Q3IYS2"/>
<dbReference type="UniPathway" id="UPA00034">
    <property type="reaction ID" value="UER00021"/>
</dbReference>
<dbReference type="Proteomes" id="UP000002703">
    <property type="component" value="Chromosome 1"/>
</dbReference>
<dbReference type="GO" id="GO:0008777">
    <property type="term" value="F:acetylornithine deacetylase activity"/>
    <property type="evidence" value="ECO:0007669"/>
    <property type="project" value="TreeGrafter"/>
</dbReference>
<dbReference type="GO" id="GO:0050897">
    <property type="term" value="F:cobalt ion binding"/>
    <property type="evidence" value="ECO:0007669"/>
    <property type="project" value="UniProtKB-UniRule"/>
</dbReference>
<dbReference type="GO" id="GO:0009014">
    <property type="term" value="F:succinyl-diaminopimelate desuccinylase activity"/>
    <property type="evidence" value="ECO:0007669"/>
    <property type="project" value="UniProtKB-UniRule"/>
</dbReference>
<dbReference type="GO" id="GO:0008270">
    <property type="term" value="F:zinc ion binding"/>
    <property type="evidence" value="ECO:0007669"/>
    <property type="project" value="UniProtKB-UniRule"/>
</dbReference>
<dbReference type="GO" id="GO:0019877">
    <property type="term" value="P:diaminopimelate biosynthetic process"/>
    <property type="evidence" value="ECO:0007669"/>
    <property type="project" value="UniProtKB-UniRule"/>
</dbReference>
<dbReference type="GO" id="GO:0006526">
    <property type="term" value="P:L-arginine biosynthetic process"/>
    <property type="evidence" value="ECO:0007669"/>
    <property type="project" value="TreeGrafter"/>
</dbReference>
<dbReference type="GO" id="GO:0009089">
    <property type="term" value="P:lysine biosynthetic process via diaminopimelate"/>
    <property type="evidence" value="ECO:0007669"/>
    <property type="project" value="UniProtKB-UniRule"/>
</dbReference>
<dbReference type="CDD" id="cd03891">
    <property type="entry name" value="M20_DapE_proteobac"/>
    <property type="match status" value="1"/>
</dbReference>
<dbReference type="Gene3D" id="3.40.630.10">
    <property type="entry name" value="Zn peptidases"/>
    <property type="match status" value="2"/>
</dbReference>
<dbReference type="HAMAP" id="MF_01690">
    <property type="entry name" value="DapE"/>
    <property type="match status" value="1"/>
</dbReference>
<dbReference type="InterPro" id="IPR001261">
    <property type="entry name" value="ArgE/DapE_CS"/>
</dbReference>
<dbReference type="InterPro" id="IPR036264">
    <property type="entry name" value="Bact_exopeptidase_dim_dom"/>
</dbReference>
<dbReference type="InterPro" id="IPR005941">
    <property type="entry name" value="DapE_proteobac"/>
</dbReference>
<dbReference type="InterPro" id="IPR002933">
    <property type="entry name" value="Peptidase_M20"/>
</dbReference>
<dbReference type="InterPro" id="IPR011650">
    <property type="entry name" value="Peptidase_M20_dimer"/>
</dbReference>
<dbReference type="InterPro" id="IPR050072">
    <property type="entry name" value="Peptidase_M20A"/>
</dbReference>
<dbReference type="NCBIfam" id="TIGR01246">
    <property type="entry name" value="dapE_proteo"/>
    <property type="match status" value="1"/>
</dbReference>
<dbReference type="NCBIfam" id="NF009557">
    <property type="entry name" value="PRK13009.1"/>
    <property type="match status" value="1"/>
</dbReference>
<dbReference type="PANTHER" id="PTHR43808">
    <property type="entry name" value="ACETYLORNITHINE DEACETYLASE"/>
    <property type="match status" value="1"/>
</dbReference>
<dbReference type="PANTHER" id="PTHR43808:SF31">
    <property type="entry name" value="N-ACETYL-L-CITRULLINE DEACETYLASE"/>
    <property type="match status" value="1"/>
</dbReference>
<dbReference type="Pfam" id="PF07687">
    <property type="entry name" value="M20_dimer"/>
    <property type="match status" value="1"/>
</dbReference>
<dbReference type="Pfam" id="PF01546">
    <property type="entry name" value="Peptidase_M20"/>
    <property type="match status" value="1"/>
</dbReference>
<dbReference type="SUPFAM" id="SSF55031">
    <property type="entry name" value="Bacterial exopeptidase dimerisation domain"/>
    <property type="match status" value="1"/>
</dbReference>
<dbReference type="SUPFAM" id="SSF53187">
    <property type="entry name" value="Zn-dependent exopeptidases"/>
    <property type="match status" value="1"/>
</dbReference>
<dbReference type="PROSITE" id="PS00759">
    <property type="entry name" value="ARGE_DAPE_CPG2_2"/>
    <property type="match status" value="1"/>
</dbReference>
<name>DAPE_CERS4</name>
<proteinExistence type="inferred from homology"/>
<organism>
    <name type="scientific">Cereibacter sphaeroides (strain ATCC 17023 / DSM 158 / JCM 6121 / CCUG 31486 / LMG 2827 / NBRC 12203 / NCIMB 8253 / ATH 2.4.1.)</name>
    <name type="common">Rhodobacter sphaeroides</name>
    <dbReference type="NCBI Taxonomy" id="272943"/>
    <lineage>
        <taxon>Bacteria</taxon>
        <taxon>Pseudomonadati</taxon>
        <taxon>Pseudomonadota</taxon>
        <taxon>Alphaproteobacteria</taxon>
        <taxon>Rhodobacterales</taxon>
        <taxon>Paracoccaceae</taxon>
        <taxon>Cereibacter</taxon>
    </lineage>
</organism>
<protein>
    <recommendedName>
        <fullName evidence="1">Succinyl-diaminopimelate desuccinylase</fullName>
        <shortName evidence="1">SDAP desuccinylase</shortName>
        <ecNumber evidence="1">3.5.1.18</ecNumber>
    </recommendedName>
    <alternativeName>
        <fullName evidence="1">N-succinyl-LL-2,6-diaminoheptanedioate amidohydrolase</fullName>
    </alternativeName>
</protein>
<gene>
    <name evidence="1" type="primary">dapE</name>
    <name type="ordered locus">RHOS4_27440</name>
    <name type="ORF">RSP_1128</name>
</gene>
<evidence type="ECO:0000255" key="1">
    <source>
        <dbReference type="HAMAP-Rule" id="MF_01690"/>
    </source>
</evidence>
<keyword id="KW-0028">Amino-acid biosynthesis</keyword>
<keyword id="KW-0170">Cobalt</keyword>
<keyword id="KW-0220">Diaminopimelate biosynthesis</keyword>
<keyword id="KW-0378">Hydrolase</keyword>
<keyword id="KW-0457">Lysine biosynthesis</keyword>
<keyword id="KW-0479">Metal-binding</keyword>
<keyword id="KW-1185">Reference proteome</keyword>
<keyword id="KW-0862">Zinc</keyword>